<evidence type="ECO:0000255" key="1">
    <source>
        <dbReference type="HAMAP-Rule" id="MF_00189"/>
    </source>
</evidence>
<name>YCIB_MARMS</name>
<gene>
    <name evidence="1" type="primary">yciB</name>
    <name type="ordered locus">Mmwyl1_3397</name>
</gene>
<proteinExistence type="inferred from homology"/>
<keyword id="KW-0997">Cell inner membrane</keyword>
<keyword id="KW-1003">Cell membrane</keyword>
<keyword id="KW-0472">Membrane</keyword>
<keyword id="KW-0812">Transmembrane</keyword>
<keyword id="KW-1133">Transmembrane helix</keyword>
<sequence>MKILFDFLPIVIFFVVYKMTGNIIIATAILIPATIIQVGFTWFKNRTIEKMHLVSLALVVLLGGATVLLGDGDFIKWKPTIVNGLFAIAFLGSQFIGDKNIIQRMMGDKLDLPFKVWRTLNLAWVGFFIVSGVTNLYVAFSYSEEIWVDFKLFGLLGMTIVFIILQGIYLSSHLQNKE</sequence>
<protein>
    <recommendedName>
        <fullName evidence="1">Inner membrane-spanning protein YciB</fullName>
    </recommendedName>
</protein>
<comment type="function">
    <text evidence="1">Plays a role in cell envelope biogenesis, maintenance of cell envelope integrity and membrane homeostasis.</text>
</comment>
<comment type="subcellular location">
    <subcellularLocation>
        <location evidence="1">Cell inner membrane</location>
        <topology evidence="1">Multi-pass membrane protein</topology>
    </subcellularLocation>
</comment>
<comment type="similarity">
    <text evidence="1">Belongs to the YciB family.</text>
</comment>
<accession>A6W0S1</accession>
<feature type="chain" id="PRO_1000077488" description="Inner membrane-spanning protein YciB">
    <location>
        <begin position="1"/>
        <end position="178"/>
    </location>
</feature>
<feature type="transmembrane region" description="Helical" evidence="1">
    <location>
        <begin position="1"/>
        <end position="21"/>
    </location>
</feature>
<feature type="transmembrane region" description="Helical" evidence="1">
    <location>
        <begin position="23"/>
        <end position="43"/>
    </location>
</feature>
<feature type="transmembrane region" description="Helical" evidence="1">
    <location>
        <begin position="51"/>
        <end position="71"/>
    </location>
</feature>
<feature type="transmembrane region" description="Helical" evidence="1">
    <location>
        <begin position="77"/>
        <end position="97"/>
    </location>
</feature>
<feature type="transmembrane region" description="Helical" evidence="1">
    <location>
        <begin position="120"/>
        <end position="140"/>
    </location>
</feature>
<feature type="transmembrane region" description="Helical" evidence="1">
    <location>
        <begin position="150"/>
        <end position="170"/>
    </location>
</feature>
<organism>
    <name type="scientific">Marinomonas sp. (strain MWYL1)</name>
    <dbReference type="NCBI Taxonomy" id="400668"/>
    <lineage>
        <taxon>Bacteria</taxon>
        <taxon>Pseudomonadati</taxon>
        <taxon>Pseudomonadota</taxon>
        <taxon>Gammaproteobacteria</taxon>
        <taxon>Oceanospirillales</taxon>
        <taxon>Oceanospirillaceae</taxon>
        <taxon>Marinomonas</taxon>
    </lineage>
</organism>
<dbReference type="EMBL" id="CP000749">
    <property type="protein sequence ID" value="ABR72300.1"/>
    <property type="molecule type" value="Genomic_DNA"/>
</dbReference>
<dbReference type="STRING" id="400668.Mmwyl1_3397"/>
<dbReference type="KEGG" id="mmw:Mmwyl1_3397"/>
<dbReference type="eggNOG" id="COG2917">
    <property type="taxonomic scope" value="Bacteria"/>
</dbReference>
<dbReference type="HOGENOM" id="CLU_089554_2_0_6"/>
<dbReference type="OrthoDB" id="9788219at2"/>
<dbReference type="GO" id="GO:0005886">
    <property type="term" value="C:plasma membrane"/>
    <property type="evidence" value="ECO:0007669"/>
    <property type="project" value="UniProtKB-SubCell"/>
</dbReference>
<dbReference type="HAMAP" id="MF_00189">
    <property type="entry name" value="YciB"/>
    <property type="match status" value="1"/>
</dbReference>
<dbReference type="InterPro" id="IPR006008">
    <property type="entry name" value="YciB"/>
</dbReference>
<dbReference type="NCBIfam" id="TIGR00997">
    <property type="entry name" value="ispZ"/>
    <property type="match status" value="1"/>
</dbReference>
<dbReference type="NCBIfam" id="NF001324">
    <property type="entry name" value="PRK00259.1-2"/>
    <property type="match status" value="1"/>
</dbReference>
<dbReference type="NCBIfam" id="NF001325">
    <property type="entry name" value="PRK00259.1-3"/>
    <property type="match status" value="1"/>
</dbReference>
<dbReference type="PANTHER" id="PTHR36917:SF1">
    <property type="entry name" value="INNER MEMBRANE-SPANNING PROTEIN YCIB"/>
    <property type="match status" value="1"/>
</dbReference>
<dbReference type="PANTHER" id="PTHR36917">
    <property type="entry name" value="INTRACELLULAR SEPTATION PROTEIN A-RELATED"/>
    <property type="match status" value="1"/>
</dbReference>
<dbReference type="Pfam" id="PF04279">
    <property type="entry name" value="IspA"/>
    <property type="match status" value="1"/>
</dbReference>
<reference key="1">
    <citation type="submission" date="2007-06" db="EMBL/GenBank/DDBJ databases">
        <title>Complete sequence of Marinomonas sp. MWYL1.</title>
        <authorList>
            <consortium name="US DOE Joint Genome Institute"/>
            <person name="Copeland A."/>
            <person name="Lucas S."/>
            <person name="Lapidus A."/>
            <person name="Barry K."/>
            <person name="Glavina del Rio T."/>
            <person name="Dalin E."/>
            <person name="Tice H."/>
            <person name="Pitluck S."/>
            <person name="Kiss H."/>
            <person name="Brettin T."/>
            <person name="Bruce D."/>
            <person name="Detter J.C."/>
            <person name="Han C."/>
            <person name="Schmutz J."/>
            <person name="Larimer F."/>
            <person name="Land M."/>
            <person name="Hauser L."/>
            <person name="Kyrpides N."/>
            <person name="Kim E."/>
            <person name="Johnston A.W.B."/>
            <person name="Todd J.D."/>
            <person name="Rogers R."/>
            <person name="Wexler M."/>
            <person name="Bond P.L."/>
            <person name="Li Y."/>
            <person name="Richardson P."/>
        </authorList>
    </citation>
    <scope>NUCLEOTIDE SEQUENCE [LARGE SCALE GENOMIC DNA]</scope>
    <source>
        <strain>MWYL1</strain>
    </source>
</reference>